<organism>
    <name type="scientific">Desulfovibrio desulfuricans (strain ATCC 27774 / DSM 6949 / MB)</name>
    <dbReference type="NCBI Taxonomy" id="525146"/>
    <lineage>
        <taxon>Bacteria</taxon>
        <taxon>Pseudomonadati</taxon>
        <taxon>Thermodesulfobacteriota</taxon>
        <taxon>Desulfovibrionia</taxon>
        <taxon>Desulfovibrionales</taxon>
        <taxon>Desulfovibrionaceae</taxon>
        <taxon>Desulfovibrio</taxon>
    </lineage>
</organism>
<gene>
    <name evidence="3" type="ordered locus">Ddes_2018</name>
</gene>
<reference key="1">
    <citation type="submission" date="2009-01" db="EMBL/GenBank/DDBJ databases">
        <title>Complete sequence of Desulfovibrio desulfuricans subsp. desulfuricans str. ATCC 27774.</title>
        <authorList>
            <consortium name="US DOE Joint Genome Institute"/>
            <person name="Lucas S."/>
            <person name="Copeland A."/>
            <person name="Lapidus A."/>
            <person name="Glavina del Rio T."/>
            <person name="Tice H."/>
            <person name="Bruce D."/>
            <person name="Goodwin L."/>
            <person name="Pitluck S."/>
            <person name="Sims D."/>
            <person name="Lu M."/>
            <person name="Kiss H."/>
            <person name="Meineke L."/>
            <person name="Brettin T."/>
            <person name="Detter J.C."/>
            <person name="Han C."/>
            <person name="Larimer F."/>
            <person name="Land M."/>
            <person name="Hauser L."/>
            <person name="Kyrpides N."/>
            <person name="Ovchinnikova G."/>
            <person name="Hazen T.C."/>
        </authorList>
    </citation>
    <scope>NUCLEOTIDE SEQUENCE [LARGE SCALE GENOMIC DNA]</scope>
    <source>
        <strain>ATCC 27774 / DSM 6949 / MB</strain>
    </source>
</reference>
<reference evidence="4 5" key="2">
    <citation type="journal article" date="2014" name="Mol. Microbiol.">
        <title>The structure, function and properties of sirohaem decarboxylase--an enzyme with structural homology to a transcription factor family that is part of the alternative haem biosynthesis pathway.</title>
        <authorList>
            <person name="Palmer D.J."/>
            <person name="Schroeder S."/>
            <person name="Lawrence A.D."/>
            <person name="Deery E."/>
            <person name="Lobo S.A."/>
            <person name="Saraiva L.M."/>
            <person name="McLean K.J."/>
            <person name="Munro A.W."/>
            <person name="Ferguson S.J."/>
            <person name="Pickersgill R.W."/>
            <person name="Brown D.G."/>
            <person name="Warren M.J."/>
        </authorList>
    </citation>
    <scope>X-RAY CRYSTALLOGRAPHY (1.97 ANGSTROMS) IN COMPLEXES WITH AHBA AND DIDECARBOXYSIROHEME</scope>
    <scope>FUNCTION</scope>
    <scope>CATALYTIC ACTIVITY</scope>
    <scope>BIOPHYSICOCHEMICAL PROPERTIES</scope>
    <scope>PATHWAY</scope>
    <scope>SUBUNIT</scope>
    <scope>MUTAGENESIS OF ARG-102</scope>
</reference>
<name>AHBB_DESDA</name>
<comment type="function">
    <text evidence="1">Involved in siroheme-dependent heme b biosynthesis. Catalyzes the decarboxylation of siroheme into didecarboxysiroheme (PubMed:24865947). Siroheme is decarboxylated to monodecarboxysiroheme, which is in turn decarboxylated to didecarboxysiroheme (PubMed:24865947).</text>
</comment>
<comment type="catalytic activity">
    <reaction evidence="1">
        <text>siroheme + 2 H(+) = 12,18-didecarboxysiroheme + 2 CO2</text>
        <dbReference type="Rhea" id="RHEA:19093"/>
        <dbReference type="ChEBI" id="CHEBI:15378"/>
        <dbReference type="ChEBI" id="CHEBI:16526"/>
        <dbReference type="ChEBI" id="CHEBI:60052"/>
        <dbReference type="ChEBI" id="CHEBI:140497"/>
        <dbReference type="EC" id="4.1.1.111"/>
    </reaction>
</comment>
<comment type="biophysicochemical properties">
    <kinetics>
        <KM evidence="1">11.74 uM for siroheme</KM>
        <KM evidence="1">9.94 uM for monodecarboxysiroheme</KM>
    </kinetics>
</comment>
<comment type="pathway">
    <text evidence="1">Porphyrin-containing compound metabolism; protoheme biosynthesis.</text>
</comment>
<comment type="subunit">
    <text evidence="1">Forms a heterodimer composed of AhbA and AhbB.</text>
</comment>
<comment type="similarity">
    <text evidence="2">Belongs to the Ahb/Nir family.</text>
</comment>
<sequence>MSHQFSPEEQAVLRIVQANLPDSLTPYADLAEQAGMTEAQVLELLGRLKASGAIRRFGASIKHQKTGWTHNAMVAWKVTPDQVDDCGRKAAEHSHISHVYYRPSSAPDWPYEMYTMIHGRSEAECLGVVEDVKRTTSLKEHAILRSLKELKKTSMTYFT</sequence>
<evidence type="ECO:0000269" key="1">
    <source>
    </source>
</evidence>
<evidence type="ECO:0000305" key="2"/>
<evidence type="ECO:0000312" key="3">
    <source>
        <dbReference type="EMBL" id="ACL49914.1"/>
    </source>
</evidence>
<evidence type="ECO:0007744" key="4">
    <source>
        <dbReference type="PDB" id="4CZD"/>
    </source>
</evidence>
<evidence type="ECO:0007744" key="5">
    <source>
        <dbReference type="PDB" id="4UN1"/>
    </source>
</evidence>
<evidence type="ECO:0007829" key="6">
    <source>
        <dbReference type="PDB" id="4UN1"/>
    </source>
</evidence>
<protein>
    <recommendedName>
        <fullName evidence="2">Siroheme decarboxylase beta subunit</fullName>
        <ecNumber evidence="1">4.1.1.111</ecNumber>
    </recommendedName>
</protein>
<feature type="chain" id="PRO_0000450507" description="Siroheme decarboxylase beta subunit">
    <location>
        <begin position="1"/>
        <end position="159"/>
    </location>
</feature>
<feature type="binding site" evidence="1">
    <location>
        <begin position="152"/>
        <end position="157"/>
    </location>
    <ligand>
        <name>substrate</name>
    </ligand>
</feature>
<feature type="mutagenesis site" description="Loss of activity." evidence="1">
    <original>R</original>
    <variation>A</variation>
    <location>
        <position position="102"/>
    </location>
</feature>
<feature type="turn" evidence="6">
    <location>
        <begin position="2"/>
        <end position="4"/>
    </location>
</feature>
<feature type="helix" evidence="6">
    <location>
        <begin position="7"/>
        <end position="16"/>
    </location>
</feature>
<feature type="strand" evidence="6">
    <location>
        <begin position="22"/>
        <end position="24"/>
    </location>
</feature>
<feature type="helix" evidence="6">
    <location>
        <begin position="26"/>
        <end position="33"/>
    </location>
</feature>
<feature type="helix" evidence="6">
    <location>
        <begin position="38"/>
        <end position="51"/>
    </location>
</feature>
<feature type="strand" evidence="6">
    <location>
        <begin position="52"/>
        <end position="62"/>
    </location>
</feature>
<feature type="strand" evidence="6">
    <location>
        <begin position="68"/>
        <end position="76"/>
    </location>
</feature>
<feature type="helix" evidence="6">
    <location>
        <begin position="80"/>
        <end position="82"/>
    </location>
</feature>
<feature type="helix" evidence="6">
    <location>
        <begin position="83"/>
        <end position="91"/>
    </location>
</feature>
<feature type="strand" evidence="6">
    <location>
        <begin position="96"/>
        <end position="101"/>
    </location>
</feature>
<feature type="strand" evidence="6">
    <location>
        <begin position="113"/>
        <end position="121"/>
    </location>
</feature>
<feature type="helix" evidence="6">
    <location>
        <begin position="122"/>
        <end position="135"/>
    </location>
</feature>
<feature type="strand" evidence="6">
    <location>
        <begin position="141"/>
        <end position="143"/>
    </location>
</feature>
<feature type="strand" evidence="6">
    <location>
        <begin position="146"/>
        <end position="152"/>
    </location>
</feature>
<proteinExistence type="evidence at protein level"/>
<accession>B8J3A4</accession>
<keyword id="KW-0002">3D-structure</keyword>
<keyword id="KW-0350">Heme biosynthesis</keyword>
<keyword id="KW-0456">Lyase</keyword>
<dbReference type="EC" id="4.1.1.111" evidence="1"/>
<dbReference type="EMBL" id="CP001358">
    <property type="protein sequence ID" value="ACL49914.1"/>
    <property type="molecule type" value="Genomic_DNA"/>
</dbReference>
<dbReference type="PDB" id="4CZD">
    <property type="method" value="X-ray"/>
    <property type="resolution" value="2.23 A"/>
    <property type="chains" value="B/D=1-159"/>
</dbReference>
<dbReference type="PDB" id="4UN1">
    <property type="method" value="X-ray"/>
    <property type="resolution" value="1.97 A"/>
    <property type="chains" value="B/D=1-159"/>
</dbReference>
<dbReference type="PDBsum" id="4CZD"/>
<dbReference type="PDBsum" id="4UN1"/>
<dbReference type="SMR" id="B8J3A4"/>
<dbReference type="STRING" id="525146.Ddes_2018"/>
<dbReference type="KEGG" id="dds:Ddes_2018"/>
<dbReference type="eggNOG" id="COG1522">
    <property type="taxonomic scope" value="Bacteria"/>
</dbReference>
<dbReference type="HOGENOM" id="CLU_112007_0_1_7"/>
<dbReference type="UniPathway" id="UPA00252"/>
<dbReference type="EvolutionaryTrace" id="B8J3A4"/>
<dbReference type="GO" id="GO:0016829">
    <property type="term" value="F:lyase activity"/>
    <property type="evidence" value="ECO:0007669"/>
    <property type="project" value="UniProtKB-KW"/>
</dbReference>
<dbReference type="GO" id="GO:0006783">
    <property type="term" value="P:heme biosynthetic process"/>
    <property type="evidence" value="ECO:0007669"/>
    <property type="project" value="UniProtKB-KW"/>
</dbReference>
<dbReference type="Gene3D" id="3.30.70.3460">
    <property type="match status" value="1"/>
</dbReference>
<dbReference type="InterPro" id="IPR040523">
    <property type="entry name" value="AsnC_trans_reg2"/>
</dbReference>
<dbReference type="InterPro" id="IPR050684">
    <property type="entry name" value="HTH-Siroheme_Decarb"/>
</dbReference>
<dbReference type="InterPro" id="IPR053953">
    <property type="entry name" value="NirdL-like_HTH"/>
</dbReference>
<dbReference type="InterPro" id="IPR036390">
    <property type="entry name" value="WH_DNA-bd_sf"/>
</dbReference>
<dbReference type="PANTHER" id="PTHR43413:SF1">
    <property type="entry name" value="SIROHEME DECARBOXYLASE NIRL SUBUNIT"/>
    <property type="match status" value="1"/>
</dbReference>
<dbReference type="PANTHER" id="PTHR43413">
    <property type="entry name" value="TRANSCRIPTIONAL REGULATOR, ASNC FAMILY"/>
    <property type="match status" value="1"/>
</dbReference>
<dbReference type="Pfam" id="PF17805">
    <property type="entry name" value="AsnC_trans_reg2"/>
    <property type="match status" value="1"/>
</dbReference>
<dbReference type="Pfam" id="PF22451">
    <property type="entry name" value="NirdL-like_HTH"/>
    <property type="match status" value="1"/>
</dbReference>
<dbReference type="SUPFAM" id="SSF46785">
    <property type="entry name" value="Winged helix' DNA-binding domain"/>
    <property type="match status" value="1"/>
</dbReference>